<reference key="1">
    <citation type="journal article" date="2005" name="Microbiology">
        <title>Biochemical and molecular characterization of a periplasmic hydrolase for oxidized polyvinyl alcohol from Sphingomonas sp. strain 113P3.</title>
        <authorList>
            <person name="Klomklang W."/>
            <person name="Tani A."/>
            <person name="Kimbara K."/>
            <person name="Mamoto R."/>
            <person name="Ueda T."/>
            <person name="Shimao M."/>
            <person name="Kawai F."/>
        </authorList>
    </citation>
    <scope>NUCLEOTIDE SEQUENCE [GENOMIC DNA]</scope>
    <scope>PROTEIN SEQUENCE OF 35-49 AND 222-230</scope>
    <scope>FUNCTION</scope>
    <scope>CATALYTIC ACTIVITY</scope>
    <scope>SUBCELLULAR LOCATION</scope>
    <scope>BIOPHYSICOCHEMICAL PROPERTIES</scope>
    <scope>SUBUNIT</scope>
    <source>
        <strain>113P3</strain>
    </source>
</reference>
<sequence>MFKPVVKSRSSRSFCYLAGCLAMVAATLSSTAQAKSEWACPEGFTPKAGLNTDFPSDGKKRAFVVVPPKDSAGGAPVWVPMVGTVEATNWNLNVPRSGNNAKLAEHGYMVISPVRQCAEQDPNLGAGACNGVGKDGWTWNPWNDGRAPDASGDKYKTDAGDDVRFLEAMVRCVGTKWKLDRKRLFLGGISAGGTMTNRALLFDSEFWAGGMPISGEWYSTKDDGSTVPFQETRKMVAAAPAKIWQGRVGPYPLPSKLDPMVVITVWGGEKDLWDCGPPLGLCSDYRPTTQASSNYFSSISNVVHVACSATHGHMWPQVNTDAFNLWALNTMASHPKGSSPKDFKLTAPPEGYSCKIGRFTDHYK</sequence>
<protein>
    <recommendedName>
        <fullName>Oxidized polyvinyl alcohol hydrolase</fullName>
        <shortName>OPH</shortName>
        <shortName>Oxidized PVA hydrolase</shortName>
        <ecNumber>3.7.1.7</ecNumber>
    </recommendedName>
    <alternativeName>
        <fullName>Beta-diketone hydrolase</fullName>
    </alternativeName>
</protein>
<keyword id="KW-0002">3D-structure</keyword>
<keyword id="KW-0903">Direct protein sequencing</keyword>
<keyword id="KW-0378">Hydrolase</keyword>
<keyword id="KW-0574">Periplasm</keyword>
<keyword id="KW-0732">Signal</keyword>
<name>OPH_SPHS1</name>
<gene>
    <name type="primary">oph</name>
</gene>
<comment type="function">
    <text evidence="2">Catalyzes the hydrolysis of 4,6-nonanedione, a beta-diketone compound. Also mediates hydrolysis of oxidized polyvinyl alcohol (PVA) in the second step in the degradation of polyvinyl alcohol. Not active toward the monoketone structure.</text>
</comment>
<comment type="catalytic activity">
    <reaction evidence="2">
        <text>nonane-4,6-dione + H2O = pentan-2-one + butanoate + H(+)</text>
        <dbReference type="Rhea" id="RHEA:11908"/>
        <dbReference type="ChEBI" id="CHEBI:15377"/>
        <dbReference type="ChEBI" id="CHEBI:15378"/>
        <dbReference type="ChEBI" id="CHEBI:16111"/>
        <dbReference type="ChEBI" id="CHEBI:16472"/>
        <dbReference type="ChEBI" id="CHEBI:17968"/>
        <dbReference type="EC" id="3.7.1.7"/>
    </reaction>
</comment>
<comment type="biophysicochemical properties">
    <kinetics>
        <KM evidence="2">0.2 mM for polyvinyl alcohol</KM>
        <KM evidence="2">0.3 mM for p-nitrophenyl acetate</KM>
        <Vmax evidence="2">0.1 umol/min/mg enzyme with polyvinyl alcohol as substrate</Vmax>
        <Vmax evidence="2">3.4 umol/min/mg enzyme with p-nitrophenyl acetate as substrate</Vmax>
    </kinetics>
    <phDependence>
        <text evidence="2">Optimum pH is 8.0.</text>
    </phDependence>
    <temperatureDependence>
        <text evidence="2">Optimum temperature is 37 degrees Celsius.</text>
    </temperatureDependence>
</comment>
<comment type="subunit">
    <text evidence="2">Monomer.</text>
</comment>
<comment type="subcellular location">
    <subcellularLocation>
        <location evidence="2">Periplasm</location>
    </subcellularLocation>
</comment>
<comment type="similarity">
    <text evidence="3">Belongs to the peptidase S9A family.</text>
</comment>
<feature type="signal peptide" evidence="2">
    <location>
        <begin position="1"/>
        <end position="34"/>
    </location>
</feature>
<feature type="chain" id="PRO_0000419458" description="Oxidized polyvinyl alcohol hydrolase">
    <location>
        <begin position="35"/>
        <end position="364"/>
    </location>
</feature>
<feature type="active site" description="Charge relay system" evidence="1">
    <location>
        <position position="190"/>
    </location>
</feature>
<feature type="active site" description="Charge relay system" evidence="1">
    <location>
        <position position="293"/>
    </location>
</feature>
<feature type="strand" evidence="4">
    <location>
        <begin position="48"/>
        <end position="56"/>
    </location>
</feature>
<feature type="strand" evidence="4">
    <location>
        <begin position="59"/>
        <end position="66"/>
    </location>
</feature>
<feature type="strand" evidence="4">
    <location>
        <begin position="72"/>
        <end position="81"/>
    </location>
</feature>
<feature type="strand" evidence="4">
    <location>
        <begin position="84"/>
        <end position="86"/>
    </location>
</feature>
<feature type="helix" evidence="4">
    <location>
        <begin position="88"/>
        <end position="93"/>
    </location>
</feature>
<feature type="helix" evidence="4">
    <location>
        <begin position="95"/>
        <end position="97"/>
    </location>
</feature>
<feature type="helix" evidence="4">
    <location>
        <begin position="100"/>
        <end position="106"/>
    </location>
</feature>
<feature type="strand" evidence="4">
    <location>
        <begin position="109"/>
        <end position="113"/>
    </location>
</feature>
<feature type="helix" evidence="4">
    <location>
        <begin position="116"/>
        <end position="118"/>
    </location>
</feature>
<feature type="helix" evidence="4">
    <location>
        <begin position="127"/>
        <end position="129"/>
    </location>
</feature>
<feature type="strand" evidence="4">
    <location>
        <begin position="130"/>
        <end position="132"/>
    </location>
</feature>
<feature type="strand" evidence="4">
    <location>
        <begin position="137"/>
        <end position="142"/>
    </location>
</feature>
<feature type="helix" evidence="4">
    <location>
        <begin position="150"/>
        <end position="156"/>
    </location>
</feature>
<feature type="helix" evidence="4">
    <location>
        <begin position="161"/>
        <end position="173"/>
    </location>
</feature>
<feature type="turn" evidence="4">
    <location>
        <begin position="174"/>
        <end position="176"/>
    </location>
</feature>
<feature type="strand" evidence="4">
    <location>
        <begin position="179"/>
        <end position="189"/>
    </location>
</feature>
<feature type="helix" evidence="4">
    <location>
        <begin position="191"/>
        <end position="202"/>
    </location>
</feature>
<feature type="turn" evidence="4">
    <location>
        <begin position="204"/>
        <end position="206"/>
    </location>
</feature>
<feature type="strand" evidence="4">
    <location>
        <begin position="208"/>
        <end position="214"/>
    </location>
</feature>
<feature type="helix" evidence="4">
    <location>
        <begin position="229"/>
        <end position="238"/>
    </location>
</feature>
<feature type="strand" evidence="4">
    <location>
        <begin position="259"/>
        <end position="266"/>
    </location>
</feature>
<feature type="strand" evidence="4">
    <location>
        <begin position="272"/>
        <end position="274"/>
    </location>
</feature>
<feature type="turn" evidence="4">
    <location>
        <begin position="277"/>
        <end position="279"/>
    </location>
</feature>
<feature type="strand" evidence="4">
    <location>
        <begin position="281"/>
        <end position="284"/>
    </location>
</feature>
<feature type="helix" evidence="4">
    <location>
        <begin position="285"/>
        <end position="297"/>
    </location>
</feature>
<feature type="strand" evidence="4">
    <location>
        <begin position="302"/>
        <end position="308"/>
    </location>
</feature>
<feature type="strand" evidence="4">
    <location>
        <begin position="313"/>
        <end position="315"/>
    </location>
</feature>
<feature type="helix" evidence="4">
    <location>
        <begin position="320"/>
        <end position="332"/>
    </location>
</feature>
<feature type="helix" evidence="4">
    <location>
        <begin position="340"/>
        <end position="342"/>
    </location>
</feature>
<feature type="strand" evidence="4">
    <location>
        <begin position="353"/>
        <end position="358"/>
    </location>
</feature>
<feature type="strand" evidence="4">
    <location>
        <begin position="360"/>
        <end position="362"/>
    </location>
</feature>
<evidence type="ECO:0000250" key="1"/>
<evidence type="ECO:0000269" key="2">
    <source>
    </source>
</evidence>
<evidence type="ECO:0000305" key="3"/>
<evidence type="ECO:0007829" key="4">
    <source>
        <dbReference type="PDB" id="3WLA"/>
    </source>
</evidence>
<dbReference type="EC" id="3.7.1.7"/>
<dbReference type="EMBL" id="AB190288">
    <property type="protein sequence ID" value="BAD95542.3"/>
    <property type="molecule type" value="Genomic_DNA"/>
</dbReference>
<dbReference type="PDB" id="3WLA">
    <property type="method" value="X-ray"/>
    <property type="resolution" value="1.90 A"/>
    <property type="chains" value="A/B/C=35-364"/>
</dbReference>
<dbReference type="PDBsum" id="3WLA"/>
<dbReference type="SMR" id="Q588Z2"/>
<dbReference type="STRING" id="292913.LH20_00825"/>
<dbReference type="ESTHER" id="sphs1-OPH">
    <property type="family name" value="AlphaBeta_hydrolase"/>
</dbReference>
<dbReference type="BioCyc" id="MetaCyc:MONOMER-15499"/>
<dbReference type="BRENDA" id="3.7.1.7">
    <property type="organism ID" value="8996"/>
</dbReference>
<dbReference type="GO" id="GO:0042597">
    <property type="term" value="C:periplasmic space"/>
    <property type="evidence" value="ECO:0007669"/>
    <property type="project" value="UniProtKB-SubCell"/>
</dbReference>
<dbReference type="GO" id="GO:0047699">
    <property type="term" value="F:beta-diketone hydrolase activity"/>
    <property type="evidence" value="ECO:0007669"/>
    <property type="project" value="UniProtKB-EC"/>
</dbReference>
<dbReference type="Gene3D" id="3.40.50.1820">
    <property type="entry name" value="alpha/beta hydrolase"/>
    <property type="match status" value="1"/>
</dbReference>
<dbReference type="InterPro" id="IPR029058">
    <property type="entry name" value="AB_hydrolase_fold"/>
</dbReference>
<dbReference type="InterPro" id="IPR050955">
    <property type="entry name" value="Plant_Biomass_Hydrol_Est"/>
</dbReference>
<dbReference type="PANTHER" id="PTHR43037:SF5">
    <property type="entry name" value="FERULOYL ESTERASE"/>
    <property type="match status" value="1"/>
</dbReference>
<dbReference type="PANTHER" id="PTHR43037">
    <property type="entry name" value="UNNAMED PRODUCT-RELATED"/>
    <property type="match status" value="1"/>
</dbReference>
<dbReference type="SUPFAM" id="SSF53474">
    <property type="entry name" value="alpha/beta-Hydrolases"/>
    <property type="match status" value="1"/>
</dbReference>
<proteinExistence type="evidence at protein level"/>
<accession>Q588Z2</accession>
<organism>
    <name type="scientific">Sphingopyxis sp. (strain 113P3)</name>
    <dbReference type="NCBI Taxonomy" id="292913"/>
    <lineage>
        <taxon>Bacteria</taxon>
        <taxon>Pseudomonadati</taxon>
        <taxon>Pseudomonadota</taxon>
        <taxon>Alphaproteobacteria</taxon>
        <taxon>Sphingomonadales</taxon>
        <taxon>Sphingomonadaceae</taxon>
        <taxon>Sphingopyxis</taxon>
    </lineage>
</organism>